<keyword id="KW-0238">DNA-binding</keyword>
<keyword id="KW-1185">Reference proteome</keyword>
<keyword id="KW-0804">Transcription</keyword>
<keyword id="KW-0805">Transcription regulation</keyword>
<accession>Q8U4M7</accession>
<protein>
    <recommendedName>
        <fullName>Uncharacterized HTH-type transcriptional regulator PF0054</fullName>
    </recommendedName>
</protein>
<gene>
    <name type="ordered locus">PF0054</name>
</gene>
<feature type="chain" id="PRO_0000111755" description="Uncharacterized HTH-type transcriptional regulator PF0054">
    <location>
        <begin position="1"/>
        <end position="155"/>
    </location>
</feature>
<feature type="domain" description="HTH asnC-type" evidence="1">
    <location>
        <begin position="4"/>
        <end position="65"/>
    </location>
</feature>
<feature type="DNA-binding region" description="H-T-H motif" evidence="1">
    <location>
        <begin position="23"/>
        <end position="42"/>
    </location>
</feature>
<dbReference type="EMBL" id="AE009950">
    <property type="protein sequence ID" value="AAL80178.1"/>
    <property type="molecule type" value="Genomic_DNA"/>
</dbReference>
<dbReference type="RefSeq" id="WP_011011166.1">
    <property type="nucleotide sequence ID" value="NZ_CP023154.1"/>
</dbReference>
<dbReference type="SMR" id="Q8U4M7"/>
<dbReference type="STRING" id="186497.PF0054"/>
<dbReference type="PaxDb" id="186497-PF0054"/>
<dbReference type="KEGG" id="pfu:PF0054"/>
<dbReference type="PATRIC" id="fig|186497.12.peg.58"/>
<dbReference type="eggNOG" id="arCOG01580">
    <property type="taxonomic scope" value="Archaea"/>
</dbReference>
<dbReference type="HOGENOM" id="CLU_091233_3_0_2"/>
<dbReference type="OrthoDB" id="6762at2157"/>
<dbReference type="PhylomeDB" id="Q8U4M7"/>
<dbReference type="Proteomes" id="UP000001013">
    <property type="component" value="Chromosome"/>
</dbReference>
<dbReference type="GO" id="GO:0005829">
    <property type="term" value="C:cytosol"/>
    <property type="evidence" value="ECO:0007669"/>
    <property type="project" value="TreeGrafter"/>
</dbReference>
<dbReference type="GO" id="GO:0043565">
    <property type="term" value="F:sequence-specific DNA binding"/>
    <property type="evidence" value="ECO:0007669"/>
    <property type="project" value="InterPro"/>
</dbReference>
<dbReference type="GO" id="GO:0043200">
    <property type="term" value="P:response to amino acid"/>
    <property type="evidence" value="ECO:0007669"/>
    <property type="project" value="TreeGrafter"/>
</dbReference>
<dbReference type="CDD" id="cd00090">
    <property type="entry name" value="HTH_ARSR"/>
    <property type="match status" value="1"/>
</dbReference>
<dbReference type="Gene3D" id="3.30.70.920">
    <property type="match status" value="1"/>
</dbReference>
<dbReference type="Gene3D" id="1.10.10.10">
    <property type="entry name" value="Winged helix-like DNA-binding domain superfamily/Winged helix DNA-binding domain"/>
    <property type="match status" value="1"/>
</dbReference>
<dbReference type="InterPro" id="IPR011991">
    <property type="entry name" value="ArsR-like_HTH"/>
</dbReference>
<dbReference type="InterPro" id="IPR000485">
    <property type="entry name" value="AsnC-type_HTH_dom"/>
</dbReference>
<dbReference type="InterPro" id="IPR011008">
    <property type="entry name" value="Dimeric_a/b-barrel"/>
</dbReference>
<dbReference type="InterPro" id="IPR019888">
    <property type="entry name" value="Tscrpt_reg_AsnC-like"/>
</dbReference>
<dbReference type="InterPro" id="IPR019887">
    <property type="entry name" value="Tscrpt_reg_AsnC/Lrp_C"/>
</dbReference>
<dbReference type="InterPro" id="IPR019885">
    <property type="entry name" value="Tscrpt_reg_HTH_AsnC-type_CS"/>
</dbReference>
<dbReference type="InterPro" id="IPR036388">
    <property type="entry name" value="WH-like_DNA-bd_sf"/>
</dbReference>
<dbReference type="InterPro" id="IPR036390">
    <property type="entry name" value="WH_DNA-bd_sf"/>
</dbReference>
<dbReference type="PANTHER" id="PTHR30154">
    <property type="entry name" value="LEUCINE-RESPONSIVE REGULATORY PROTEIN"/>
    <property type="match status" value="1"/>
</dbReference>
<dbReference type="PANTHER" id="PTHR30154:SF50">
    <property type="entry name" value="TRANSCRIPTIONAL REGULATOR, ASNC FAMILY"/>
    <property type="match status" value="1"/>
</dbReference>
<dbReference type="Pfam" id="PF01037">
    <property type="entry name" value="AsnC_trans_reg"/>
    <property type="match status" value="1"/>
</dbReference>
<dbReference type="Pfam" id="PF13412">
    <property type="entry name" value="HTH_24"/>
    <property type="match status" value="1"/>
</dbReference>
<dbReference type="PRINTS" id="PR00033">
    <property type="entry name" value="HTHASNC"/>
</dbReference>
<dbReference type="SMART" id="SM00344">
    <property type="entry name" value="HTH_ASNC"/>
    <property type="match status" value="1"/>
</dbReference>
<dbReference type="SUPFAM" id="SSF54909">
    <property type="entry name" value="Dimeric alpha+beta barrel"/>
    <property type="match status" value="1"/>
</dbReference>
<dbReference type="SUPFAM" id="SSF46785">
    <property type="entry name" value="Winged helix' DNA-binding domain"/>
    <property type="match status" value="1"/>
</dbReference>
<dbReference type="PROSITE" id="PS00519">
    <property type="entry name" value="HTH_ASNC_1"/>
    <property type="match status" value="1"/>
</dbReference>
<dbReference type="PROSITE" id="PS50956">
    <property type="entry name" value="HTH_ASNC_2"/>
    <property type="match status" value="1"/>
</dbReference>
<proteinExistence type="predicted"/>
<evidence type="ECO:0000255" key="1">
    <source>
        <dbReference type="PROSITE-ProRule" id="PRU00319"/>
    </source>
</evidence>
<name>REG1_PYRFU</name>
<organism>
    <name type="scientific">Pyrococcus furiosus (strain ATCC 43587 / DSM 3638 / JCM 8422 / Vc1)</name>
    <dbReference type="NCBI Taxonomy" id="186497"/>
    <lineage>
        <taxon>Archaea</taxon>
        <taxon>Methanobacteriati</taxon>
        <taxon>Methanobacteriota</taxon>
        <taxon>Thermococci</taxon>
        <taxon>Thermococcales</taxon>
        <taxon>Thermococcaceae</taxon>
        <taxon>Pyrococcus</taxon>
    </lineage>
</organism>
<reference key="1">
    <citation type="journal article" date="1999" name="Genetics">
        <title>Divergence of the hyperthermophilic archaea Pyrococcus furiosus and P. horikoshii inferred from complete genomic sequences.</title>
        <authorList>
            <person name="Maeder D.L."/>
            <person name="Weiss R.B."/>
            <person name="Dunn D.M."/>
            <person name="Cherry J.L."/>
            <person name="Gonzalez J.M."/>
            <person name="DiRuggiero J."/>
            <person name="Robb F.T."/>
        </authorList>
    </citation>
    <scope>NUCLEOTIDE SEQUENCE [LARGE SCALE GENOMIC DNA]</scope>
    <source>
        <strain>ATCC 43587 / DSM 3638 / JCM 8422 / Vc1</strain>
    </source>
</reference>
<sequence>MPSIDEVDEIILRELSKNGRATLTELSRKVGLTPAAIKNRVEKLEKLGVIKGYSAIIDHSFLGEFLTALIEIELADPESDELSKLIRPILKLENIKDVYKKTGEFQLTIRATFRDVDSLNEFLKKIRRDYLKNMARRIKVSIILENFKEGGVTLL</sequence>